<reference key="1">
    <citation type="journal article" date="1990" name="Arch. Insect Biochem. Physiol.">
        <title>Cloning of the mitochondrial genome of Anopheles quadrimaculatus.</title>
        <authorList>
            <person name="Cockburn A.F."/>
            <person name="Mitchell S.E."/>
            <person name="Seawright J.A."/>
        </authorList>
    </citation>
    <scope>NUCLEOTIDE SEQUENCE [GENOMIC DNA]</scope>
    <source>
        <strain>Orlando</strain>
    </source>
</reference>
<organism>
    <name type="scientific">Anopheles quadrimaculatus</name>
    <name type="common">Common malaria mosquito</name>
    <dbReference type="NCBI Taxonomy" id="7166"/>
    <lineage>
        <taxon>Eukaryota</taxon>
        <taxon>Metazoa</taxon>
        <taxon>Ecdysozoa</taxon>
        <taxon>Arthropoda</taxon>
        <taxon>Hexapoda</taxon>
        <taxon>Insecta</taxon>
        <taxon>Pterygota</taxon>
        <taxon>Neoptera</taxon>
        <taxon>Endopterygota</taxon>
        <taxon>Diptera</taxon>
        <taxon>Nematocera</taxon>
        <taxon>Culicoidea</taxon>
        <taxon>Culicidae</taxon>
        <taxon>Anophelinae</taxon>
        <taxon>Anopheles</taxon>
    </lineage>
</organism>
<keyword id="KW-0472">Membrane</keyword>
<keyword id="KW-0496">Mitochondrion</keyword>
<keyword id="KW-0999">Mitochondrion inner membrane</keyword>
<keyword id="KW-1278">Translocase</keyword>
<keyword id="KW-0812">Transmembrane</keyword>
<keyword id="KW-1133">Transmembrane helix</keyword>
<name>COX3_ANOQU</name>
<dbReference type="EC" id="7.1.1.9"/>
<dbReference type="EMBL" id="L04272">
    <property type="protein sequence ID" value="AAA93545.2"/>
    <property type="status" value="ALT_SEQ"/>
    <property type="molecule type" value="Genomic_DNA"/>
</dbReference>
<dbReference type="SMR" id="P33508"/>
<dbReference type="GO" id="GO:0005743">
    <property type="term" value="C:mitochondrial inner membrane"/>
    <property type="evidence" value="ECO:0007669"/>
    <property type="project" value="UniProtKB-SubCell"/>
</dbReference>
<dbReference type="GO" id="GO:0004129">
    <property type="term" value="F:cytochrome-c oxidase activity"/>
    <property type="evidence" value="ECO:0007669"/>
    <property type="project" value="UniProtKB-EC"/>
</dbReference>
<dbReference type="GO" id="GO:0006123">
    <property type="term" value="P:mitochondrial electron transport, cytochrome c to oxygen"/>
    <property type="evidence" value="ECO:0007669"/>
    <property type="project" value="TreeGrafter"/>
</dbReference>
<dbReference type="CDD" id="cd01665">
    <property type="entry name" value="Cyt_c_Oxidase_III"/>
    <property type="match status" value="1"/>
</dbReference>
<dbReference type="FunFam" id="1.10.287.70:FF:000048">
    <property type="entry name" value="Cytochrome c oxidase subunit 3"/>
    <property type="match status" value="1"/>
</dbReference>
<dbReference type="FunFam" id="1.20.120.80:FF:000002">
    <property type="entry name" value="Cytochrome c oxidase subunit 3"/>
    <property type="match status" value="1"/>
</dbReference>
<dbReference type="Gene3D" id="1.10.287.70">
    <property type="match status" value="1"/>
</dbReference>
<dbReference type="Gene3D" id="1.20.120.80">
    <property type="entry name" value="Cytochrome c oxidase, subunit III, four-helix bundle"/>
    <property type="match status" value="1"/>
</dbReference>
<dbReference type="InterPro" id="IPR024791">
    <property type="entry name" value="Cyt_c/ubiquinol_Oxase_su3"/>
</dbReference>
<dbReference type="InterPro" id="IPR033945">
    <property type="entry name" value="Cyt_c_oxase_su3_dom"/>
</dbReference>
<dbReference type="InterPro" id="IPR000298">
    <property type="entry name" value="Cyt_c_oxidase-like_su3"/>
</dbReference>
<dbReference type="InterPro" id="IPR035973">
    <property type="entry name" value="Cyt_c_oxidase_su3-like_sf"/>
</dbReference>
<dbReference type="InterPro" id="IPR013833">
    <property type="entry name" value="Cyt_c_oxidase_su3_a-hlx"/>
</dbReference>
<dbReference type="PANTHER" id="PTHR11403:SF7">
    <property type="entry name" value="CYTOCHROME C OXIDASE SUBUNIT 3"/>
    <property type="match status" value="1"/>
</dbReference>
<dbReference type="PANTHER" id="PTHR11403">
    <property type="entry name" value="CYTOCHROME C OXIDASE SUBUNIT III"/>
    <property type="match status" value="1"/>
</dbReference>
<dbReference type="Pfam" id="PF00510">
    <property type="entry name" value="COX3"/>
    <property type="match status" value="1"/>
</dbReference>
<dbReference type="SUPFAM" id="SSF81452">
    <property type="entry name" value="Cytochrome c oxidase subunit III-like"/>
    <property type="match status" value="1"/>
</dbReference>
<dbReference type="PROSITE" id="PS50253">
    <property type="entry name" value="COX3"/>
    <property type="match status" value="1"/>
</dbReference>
<gene>
    <name type="primary">COIII</name>
</gene>
<comment type="function">
    <text evidence="1">Component of the cytochrome c oxidase, the last enzyme in the mitochondrial electron transport chain which drives oxidative phosphorylation. The respiratory chain contains 3 multisubunit complexes succinate dehydrogenase (complex II, CII), ubiquinol-cytochrome c oxidoreductase (cytochrome b-c1 complex, complex III, CIII) and cytochrome c oxidase (complex IV, CIV), that cooperate to transfer electrons derived from NADH and succinate to molecular oxygen, creating an electrochemical gradient over the inner membrane that drives transmembrane transport and the ATP synthase. Cytochrome c oxidase is the component of the respiratory chain that catalyzes the reduction of oxygen to water. Electrons originating from reduced cytochrome c in the intermembrane space (IMS) are transferred via the dinuclear copper A center (CU(A)) of subunit 2 and heme A of subunit 1 to the active site in subunit 1, a binuclear center (BNC) formed by heme A3 and copper B (CU(B)). The BNC reduces molecular oxygen to 2 water molecules using 4 electrons from cytochrome c in the IMS and 4 protons from the mitochondrial matrix.</text>
</comment>
<comment type="catalytic activity">
    <reaction evidence="1">
        <text>4 Fe(II)-[cytochrome c] + O2 + 8 H(+)(in) = 4 Fe(III)-[cytochrome c] + 2 H2O + 4 H(+)(out)</text>
        <dbReference type="Rhea" id="RHEA:11436"/>
        <dbReference type="Rhea" id="RHEA-COMP:10350"/>
        <dbReference type="Rhea" id="RHEA-COMP:14399"/>
        <dbReference type="ChEBI" id="CHEBI:15377"/>
        <dbReference type="ChEBI" id="CHEBI:15378"/>
        <dbReference type="ChEBI" id="CHEBI:15379"/>
        <dbReference type="ChEBI" id="CHEBI:29033"/>
        <dbReference type="ChEBI" id="CHEBI:29034"/>
        <dbReference type="EC" id="7.1.1.9"/>
    </reaction>
    <physiologicalReaction direction="left-to-right" evidence="1">
        <dbReference type="Rhea" id="RHEA:11437"/>
    </physiologicalReaction>
</comment>
<comment type="subunit">
    <text evidence="1">Component of the cytochrome c oxidase (complex IV, CIV), a multisubunit enzyme composed of a catalytic core of 3 subunits and several supernumerary subunits. The complex exists as a monomer or a dimer and forms supercomplexes (SCs) in the inner mitochondrial membrane with ubiquinol-cytochrome c oxidoreductase (cytochrome b-c1 complex, complex III, CIII).</text>
</comment>
<comment type="subcellular location">
    <subcellularLocation>
        <location evidence="1">Mitochondrion inner membrane</location>
        <topology evidence="1">Multi-pass membrane protein</topology>
    </subcellularLocation>
</comment>
<comment type="similarity">
    <text evidence="3">Belongs to the cytochrome c oxidase subunit 3 family.</text>
</comment>
<accession>P33508</accession>
<proteinExistence type="inferred from homology"/>
<geneLocation type="mitochondrion"/>
<protein>
    <recommendedName>
        <fullName>Cytochrome c oxidase subunit 3</fullName>
        <ecNumber>7.1.1.9</ecNumber>
    </recommendedName>
    <alternativeName>
        <fullName>Cytochrome c oxidase polypeptide III</fullName>
    </alternativeName>
</protein>
<sequence length="262" mass="30172">MSAHANHPFHLVDYSPWPLTGAIGAMTTVSGLVQWFHQYTMTLFILGNIITILTMYQWWRDISREGTFQGLHTFPVTIGLRWGMILFIVSEIFFFISFFWAFFHSSLSPTIELGMTWPPVGIIAFNPFQIPLLNTAILLASGVTVTWAHHALMESNHSQATQGLFFTIVLGIYFSILQAYEYIEAPFTIADAVYGSTFYMATGFHGLHVLIGTTFLLICFLRHINFHFSKNHHFGFEAAAWYWHFVDVVWLFLYISIYWWGS</sequence>
<feature type="chain" id="PRO_0000183733" description="Cytochrome c oxidase subunit 3">
    <location>
        <begin position="1"/>
        <end position="262"/>
    </location>
</feature>
<feature type="transmembrane region" description="Helical" evidence="2">
    <location>
        <begin position="39"/>
        <end position="59"/>
    </location>
</feature>
<feature type="transmembrane region" description="Helical" evidence="2">
    <location>
        <begin position="83"/>
        <end position="103"/>
    </location>
</feature>
<feature type="transmembrane region" description="Helical" evidence="2">
    <location>
        <begin position="120"/>
        <end position="140"/>
    </location>
</feature>
<feature type="transmembrane region" description="Helical" evidence="2">
    <location>
        <begin position="163"/>
        <end position="183"/>
    </location>
</feature>
<feature type="transmembrane region" description="Helical" evidence="2">
    <location>
        <begin position="201"/>
        <end position="221"/>
    </location>
</feature>
<feature type="transmembrane region" description="Helical" evidence="2">
    <location>
        <begin position="240"/>
        <end position="260"/>
    </location>
</feature>
<evidence type="ECO:0000250" key="1">
    <source>
        <dbReference type="UniProtKB" id="P00420"/>
    </source>
</evidence>
<evidence type="ECO:0000255" key="2"/>
<evidence type="ECO:0000305" key="3"/>